<sequence>MNEDETSILNKKMEKIEVEMAEFERLGAEREKEAVERIVQEENQNPEVPSNDDASTDIKSRKEGNMKVTAEEIGLETENFDELPVSNGFGVSRRETHYGNNRTYYKNSQGYRRKPKRDDYNNNRKNFYPPIQNSTYFINATGGIDSMPYFGLNNAPGNIYPFSMYKPLEADPQYLSVPSSMPSRREAGMAYGYQNYKRGGYTPNTQYFEEPLNNTSFPNSQGKEGKNSGYRKSSRILDIRVKFGNSSMKAINFQPKKKIVHVVHNPRLHQNKVLRVSIPGSQPALVTPKHKMNVPPMGMYPLPFSPLPSAAPPIPFSPNVSSHPHMAFLPATVPTHSAPPGFVPYDFPITNDKMYPSPSFQEEFPSTSKSPSATPGSSNAPVVDMHPSADSATYPTSIYPSNVRARDDSQQAYISANMTTGEMPSMTNVPAGNAPAAPGTMYTTPLPTANSPIAYQSYSVMPTYWSFPQNYDSTVPAVYPYMPPPFSGSDMNVMSNPAADTLRSYSPASQVSTPPFGFVYYYDPNQYYVPVSNESANATSQPLSNLDTGGSAPYDHI</sequence>
<gene>
    <name type="ORF">SPCC622.15c</name>
</gene>
<name>YC8F_SCHPO</name>
<evidence type="ECO:0000255" key="1"/>
<evidence type="ECO:0000256" key="2">
    <source>
        <dbReference type="SAM" id="MobiDB-lite"/>
    </source>
</evidence>
<evidence type="ECO:0000269" key="3">
    <source>
    </source>
</evidence>
<accession>O94602</accession>
<keyword id="KW-0175">Coiled coil</keyword>
<keyword id="KW-0963">Cytoplasm</keyword>
<keyword id="KW-0539">Nucleus</keyword>
<keyword id="KW-1185">Reference proteome</keyword>
<organism>
    <name type="scientific">Schizosaccharomyces pombe (strain 972 / ATCC 24843)</name>
    <name type="common">Fission yeast</name>
    <dbReference type="NCBI Taxonomy" id="284812"/>
    <lineage>
        <taxon>Eukaryota</taxon>
        <taxon>Fungi</taxon>
        <taxon>Dikarya</taxon>
        <taxon>Ascomycota</taxon>
        <taxon>Taphrinomycotina</taxon>
        <taxon>Schizosaccharomycetes</taxon>
        <taxon>Schizosaccharomycetales</taxon>
        <taxon>Schizosaccharomycetaceae</taxon>
        <taxon>Schizosaccharomyces</taxon>
    </lineage>
</organism>
<reference key="1">
    <citation type="journal article" date="2002" name="Nature">
        <title>The genome sequence of Schizosaccharomyces pombe.</title>
        <authorList>
            <person name="Wood V."/>
            <person name="Gwilliam R."/>
            <person name="Rajandream M.A."/>
            <person name="Lyne M.H."/>
            <person name="Lyne R."/>
            <person name="Stewart A."/>
            <person name="Sgouros J.G."/>
            <person name="Peat N."/>
            <person name="Hayles J."/>
            <person name="Baker S.G."/>
            <person name="Basham D."/>
            <person name="Bowman S."/>
            <person name="Brooks K."/>
            <person name="Brown D."/>
            <person name="Brown S."/>
            <person name="Chillingworth T."/>
            <person name="Churcher C.M."/>
            <person name="Collins M."/>
            <person name="Connor R."/>
            <person name="Cronin A."/>
            <person name="Davis P."/>
            <person name="Feltwell T."/>
            <person name="Fraser A."/>
            <person name="Gentles S."/>
            <person name="Goble A."/>
            <person name="Hamlin N."/>
            <person name="Harris D.E."/>
            <person name="Hidalgo J."/>
            <person name="Hodgson G."/>
            <person name="Holroyd S."/>
            <person name="Hornsby T."/>
            <person name="Howarth S."/>
            <person name="Huckle E.J."/>
            <person name="Hunt S."/>
            <person name="Jagels K."/>
            <person name="James K.D."/>
            <person name="Jones L."/>
            <person name="Jones M."/>
            <person name="Leather S."/>
            <person name="McDonald S."/>
            <person name="McLean J."/>
            <person name="Mooney P."/>
            <person name="Moule S."/>
            <person name="Mungall K.L."/>
            <person name="Murphy L.D."/>
            <person name="Niblett D."/>
            <person name="Odell C."/>
            <person name="Oliver K."/>
            <person name="O'Neil S."/>
            <person name="Pearson D."/>
            <person name="Quail M.A."/>
            <person name="Rabbinowitsch E."/>
            <person name="Rutherford K.M."/>
            <person name="Rutter S."/>
            <person name="Saunders D."/>
            <person name="Seeger K."/>
            <person name="Sharp S."/>
            <person name="Skelton J."/>
            <person name="Simmonds M.N."/>
            <person name="Squares R."/>
            <person name="Squares S."/>
            <person name="Stevens K."/>
            <person name="Taylor K."/>
            <person name="Taylor R.G."/>
            <person name="Tivey A."/>
            <person name="Walsh S.V."/>
            <person name="Warren T."/>
            <person name="Whitehead S."/>
            <person name="Woodward J.R."/>
            <person name="Volckaert G."/>
            <person name="Aert R."/>
            <person name="Robben J."/>
            <person name="Grymonprez B."/>
            <person name="Weltjens I."/>
            <person name="Vanstreels E."/>
            <person name="Rieger M."/>
            <person name="Schaefer M."/>
            <person name="Mueller-Auer S."/>
            <person name="Gabel C."/>
            <person name="Fuchs M."/>
            <person name="Duesterhoeft A."/>
            <person name="Fritzc C."/>
            <person name="Holzer E."/>
            <person name="Moestl D."/>
            <person name="Hilbert H."/>
            <person name="Borzym K."/>
            <person name="Langer I."/>
            <person name="Beck A."/>
            <person name="Lehrach H."/>
            <person name="Reinhardt R."/>
            <person name="Pohl T.M."/>
            <person name="Eger P."/>
            <person name="Zimmermann W."/>
            <person name="Wedler H."/>
            <person name="Wambutt R."/>
            <person name="Purnelle B."/>
            <person name="Goffeau A."/>
            <person name="Cadieu E."/>
            <person name="Dreano S."/>
            <person name="Gloux S."/>
            <person name="Lelaure V."/>
            <person name="Mottier S."/>
            <person name="Galibert F."/>
            <person name="Aves S.J."/>
            <person name="Xiang Z."/>
            <person name="Hunt C."/>
            <person name="Moore K."/>
            <person name="Hurst S.M."/>
            <person name="Lucas M."/>
            <person name="Rochet M."/>
            <person name="Gaillardin C."/>
            <person name="Tallada V.A."/>
            <person name="Garzon A."/>
            <person name="Thode G."/>
            <person name="Daga R.R."/>
            <person name="Cruzado L."/>
            <person name="Jimenez J."/>
            <person name="Sanchez M."/>
            <person name="del Rey F."/>
            <person name="Benito J."/>
            <person name="Dominguez A."/>
            <person name="Revuelta J.L."/>
            <person name="Moreno S."/>
            <person name="Armstrong J."/>
            <person name="Forsburg S.L."/>
            <person name="Cerutti L."/>
            <person name="Lowe T."/>
            <person name="McCombie W.R."/>
            <person name="Paulsen I."/>
            <person name="Potashkin J."/>
            <person name="Shpakovski G.V."/>
            <person name="Ussery D."/>
            <person name="Barrell B.G."/>
            <person name="Nurse P."/>
        </authorList>
    </citation>
    <scope>NUCLEOTIDE SEQUENCE [LARGE SCALE GENOMIC DNA]</scope>
    <source>
        <strain>972 / ATCC 24843</strain>
    </source>
</reference>
<reference key="2">
    <citation type="journal article" date="2006" name="Nat. Biotechnol.">
        <title>ORFeome cloning and global analysis of protein localization in the fission yeast Schizosaccharomyces pombe.</title>
        <authorList>
            <person name="Matsuyama A."/>
            <person name="Arai R."/>
            <person name="Yashiroda Y."/>
            <person name="Shirai A."/>
            <person name="Kamata A."/>
            <person name="Sekido S."/>
            <person name="Kobayashi Y."/>
            <person name="Hashimoto A."/>
            <person name="Hamamoto M."/>
            <person name="Hiraoka Y."/>
            <person name="Horinouchi S."/>
            <person name="Yoshida M."/>
        </authorList>
    </citation>
    <scope>SUBCELLULAR LOCATION [LARGE SCALE ANALYSIS]</scope>
</reference>
<feature type="chain" id="PRO_0000352821" description="Uncharacterized protein C622.15c">
    <location>
        <begin position="1"/>
        <end position="557"/>
    </location>
</feature>
<feature type="region of interest" description="Disordered" evidence="2">
    <location>
        <begin position="39"/>
        <end position="62"/>
    </location>
</feature>
<feature type="region of interest" description="Disordered" evidence="2">
    <location>
        <begin position="101"/>
        <end position="127"/>
    </location>
</feature>
<feature type="region of interest" description="Disordered" evidence="2">
    <location>
        <begin position="356"/>
        <end position="402"/>
    </location>
</feature>
<feature type="region of interest" description="Disordered" evidence="2">
    <location>
        <begin position="536"/>
        <end position="557"/>
    </location>
</feature>
<feature type="coiled-coil region" evidence="1">
    <location>
        <begin position="2"/>
        <end position="45"/>
    </location>
</feature>
<feature type="compositionally biased region" description="Polar residues" evidence="2">
    <location>
        <begin position="101"/>
        <end position="110"/>
    </location>
</feature>
<feature type="compositionally biased region" description="Polar residues" evidence="2">
    <location>
        <begin position="358"/>
        <end position="380"/>
    </location>
</feature>
<feature type="compositionally biased region" description="Polar residues" evidence="2">
    <location>
        <begin position="390"/>
        <end position="400"/>
    </location>
</feature>
<feature type="compositionally biased region" description="Polar residues" evidence="2">
    <location>
        <begin position="536"/>
        <end position="548"/>
    </location>
</feature>
<comment type="subcellular location">
    <subcellularLocation>
        <location evidence="3">Cytoplasm</location>
    </subcellularLocation>
    <subcellularLocation>
        <location evidence="3">Nucleus</location>
    </subcellularLocation>
</comment>
<protein>
    <recommendedName>
        <fullName>Uncharacterized protein C622.15c</fullName>
    </recommendedName>
</protein>
<dbReference type="EMBL" id="CU329672">
    <property type="protein sequence ID" value="CAA21871.1"/>
    <property type="molecule type" value="Genomic_DNA"/>
</dbReference>
<dbReference type="PIR" id="T41495">
    <property type="entry name" value="T41495"/>
</dbReference>
<dbReference type="RefSeq" id="NP_588187.1">
    <property type="nucleotide sequence ID" value="NM_001023177.2"/>
</dbReference>
<dbReference type="SMR" id="O94602"/>
<dbReference type="BioGRID" id="276017">
    <property type="interactions" value="43"/>
</dbReference>
<dbReference type="iPTMnet" id="O94602"/>
<dbReference type="PaxDb" id="4896-SPCC622.15c.1"/>
<dbReference type="EnsemblFungi" id="SPCC622.15c.1">
    <property type="protein sequence ID" value="SPCC622.15c.1:pep"/>
    <property type="gene ID" value="SPCC622.15c"/>
</dbReference>
<dbReference type="KEGG" id="spo:2539454"/>
<dbReference type="PomBase" id="SPCC622.15c"/>
<dbReference type="VEuPathDB" id="FungiDB:SPCC622.15c"/>
<dbReference type="HOGENOM" id="CLU_489296_0_0_1"/>
<dbReference type="InParanoid" id="O94602"/>
<dbReference type="OMA" id="RITHVVY"/>
<dbReference type="PRO" id="PR:O94602"/>
<dbReference type="Proteomes" id="UP000002485">
    <property type="component" value="Chromosome III"/>
</dbReference>
<dbReference type="GO" id="GO:0005737">
    <property type="term" value="C:cytoplasm"/>
    <property type="evidence" value="ECO:0007005"/>
    <property type="project" value="PomBase"/>
</dbReference>
<dbReference type="GO" id="GO:0005634">
    <property type="term" value="C:nucleus"/>
    <property type="evidence" value="ECO:0007005"/>
    <property type="project" value="PomBase"/>
</dbReference>
<proteinExistence type="predicted"/>